<accession>C1ATY7</accession>
<dbReference type="EC" id="4.3.2.10" evidence="1"/>
<dbReference type="EMBL" id="AP011115">
    <property type="protein sequence ID" value="BAH48995.1"/>
    <property type="molecule type" value="Genomic_DNA"/>
</dbReference>
<dbReference type="RefSeq" id="WP_012687994.1">
    <property type="nucleotide sequence ID" value="NC_012522.1"/>
</dbReference>
<dbReference type="SMR" id="C1ATY7"/>
<dbReference type="STRING" id="632772.ROP_07480"/>
<dbReference type="KEGG" id="rop:ROP_07480"/>
<dbReference type="PATRIC" id="fig|632772.20.peg.811"/>
<dbReference type="HOGENOM" id="CLU_048577_4_0_11"/>
<dbReference type="OrthoDB" id="9781903at2"/>
<dbReference type="UniPathway" id="UPA00031">
    <property type="reaction ID" value="UER00010"/>
</dbReference>
<dbReference type="Proteomes" id="UP000002212">
    <property type="component" value="Chromosome"/>
</dbReference>
<dbReference type="GO" id="GO:0005737">
    <property type="term" value="C:cytoplasm"/>
    <property type="evidence" value="ECO:0007669"/>
    <property type="project" value="UniProtKB-SubCell"/>
</dbReference>
<dbReference type="GO" id="GO:0000107">
    <property type="term" value="F:imidazoleglycerol-phosphate synthase activity"/>
    <property type="evidence" value="ECO:0007669"/>
    <property type="project" value="UniProtKB-UniRule"/>
</dbReference>
<dbReference type="GO" id="GO:0016829">
    <property type="term" value="F:lyase activity"/>
    <property type="evidence" value="ECO:0007669"/>
    <property type="project" value="UniProtKB-KW"/>
</dbReference>
<dbReference type="GO" id="GO:0000105">
    <property type="term" value="P:L-histidine biosynthetic process"/>
    <property type="evidence" value="ECO:0007669"/>
    <property type="project" value="UniProtKB-UniRule"/>
</dbReference>
<dbReference type="CDD" id="cd04731">
    <property type="entry name" value="HisF"/>
    <property type="match status" value="1"/>
</dbReference>
<dbReference type="FunFam" id="3.20.20.70:FF:000006">
    <property type="entry name" value="Imidazole glycerol phosphate synthase subunit HisF"/>
    <property type="match status" value="1"/>
</dbReference>
<dbReference type="Gene3D" id="3.20.20.70">
    <property type="entry name" value="Aldolase class I"/>
    <property type="match status" value="1"/>
</dbReference>
<dbReference type="HAMAP" id="MF_01013">
    <property type="entry name" value="HisF"/>
    <property type="match status" value="1"/>
</dbReference>
<dbReference type="InterPro" id="IPR013785">
    <property type="entry name" value="Aldolase_TIM"/>
</dbReference>
<dbReference type="InterPro" id="IPR006062">
    <property type="entry name" value="His_biosynth"/>
</dbReference>
<dbReference type="InterPro" id="IPR004651">
    <property type="entry name" value="HisF"/>
</dbReference>
<dbReference type="InterPro" id="IPR050064">
    <property type="entry name" value="IGPS_HisA/HisF"/>
</dbReference>
<dbReference type="InterPro" id="IPR011060">
    <property type="entry name" value="RibuloseP-bd_barrel"/>
</dbReference>
<dbReference type="NCBIfam" id="TIGR00735">
    <property type="entry name" value="hisF"/>
    <property type="match status" value="1"/>
</dbReference>
<dbReference type="PANTHER" id="PTHR21235:SF2">
    <property type="entry name" value="IMIDAZOLE GLYCEROL PHOSPHATE SYNTHASE HISHF"/>
    <property type="match status" value="1"/>
</dbReference>
<dbReference type="PANTHER" id="PTHR21235">
    <property type="entry name" value="IMIDAZOLE GLYCEROL PHOSPHATE SYNTHASE SUBUNIT HISF/H IGP SYNTHASE SUBUNIT HISF/H"/>
    <property type="match status" value="1"/>
</dbReference>
<dbReference type="Pfam" id="PF00977">
    <property type="entry name" value="His_biosynth"/>
    <property type="match status" value="1"/>
</dbReference>
<dbReference type="SUPFAM" id="SSF51366">
    <property type="entry name" value="Ribulose-phoshate binding barrel"/>
    <property type="match status" value="1"/>
</dbReference>
<organism>
    <name type="scientific">Rhodococcus opacus (strain B4)</name>
    <dbReference type="NCBI Taxonomy" id="632772"/>
    <lineage>
        <taxon>Bacteria</taxon>
        <taxon>Bacillati</taxon>
        <taxon>Actinomycetota</taxon>
        <taxon>Actinomycetes</taxon>
        <taxon>Mycobacteriales</taxon>
        <taxon>Nocardiaceae</taxon>
        <taxon>Rhodococcus</taxon>
    </lineage>
</organism>
<comment type="function">
    <text evidence="1">IGPS catalyzes the conversion of PRFAR and glutamine to IGP, AICAR and glutamate. The HisF subunit catalyzes the cyclization activity that produces IGP and AICAR from PRFAR using the ammonia provided by the HisH subunit.</text>
</comment>
<comment type="catalytic activity">
    <reaction evidence="1">
        <text>5-[(5-phospho-1-deoxy-D-ribulos-1-ylimino)methylamino]-1-(5-phospho-beta-D-ribosyl)imidazole-4-carboxamide + L-glutamine = D-erythro-1-(imidazol-4-yl)glycerol 3-phosphate + 5-amino-1-(5-phospho-beta-D-ribosyl)imidazole-4-carboxamide + L-glutamate + H(+)</text>
        <dbReference type="Rhea" id="RHEA:24793"/>
        <dbReference type="ChEBI" id="CHEBI:15378"/>
        <dbReference type="ChEBI" id="CHEBI:29985"/>
        <dbReference type="ChEBI" id="CHEBI:58278"/>
        <dbReference type="ChEBI" id="CHEBI:58359"/>
        <dbReference type="ChEBI" id="CHEBI:58475"/>
        <dbReference type="ChEBI" id="CHEBI:58525"/>
        <dbReference type="EC" id="4.3.2.10"/>
    </reaction>
</comment>
<comment type="pathway">
    <text evidence="1">Amino-acid biosynthesis; L-histidine biosynthesis; L-histidine from 5-phospho-alpha-D-ribose 1-diphosphate: step 5/9.</text>
</comment>
<comment type="subunit">
    <text evidence="1">Heterodimer of HisH and HisF.</text>
</comment>
<comment type="subcellular location">
    <subcellularLocation>
        <location evidence="1">Cytoplasm</location>
    </subcellularLocation>
</comment>
<comment type="similarity">
    <text evidence="1">Belongs to the HisA/HisF family.</text>
</comment>
<protein>
    <recommendedName>
        <fullName evidence="1">Imidazole glycerol phosphate synthase subunit HisF</fullName>
        <ecNumber evidence="1">4.3.2.10</ecNumber>
    </recommendedName>
    <alternativeName>
        <fullName evidence="1">IGP synthase cyclase subunit</fullName>
    </alternativeName>
    <alternativeName>
        <fullName evidence="1">IGP synthase subunit HisF</fullName>
    </alternativeName>
    <alternativeName>
        <fullName evidence="1">ImGP synthase subunit HisF</fullName>
        <shortName evidence="1">IGPS subunit HisF</shortName>
    </alternativeName>
</protein>
<proteinExistence type="inferred from homology"/>
<sequence length="257" mass="26688">MTLAVRVIPCLDVDAGRVVKGVNFENLRDAGDPVELAAAYDAQGADELTFLDVTASTADRGTMLDVVSRTAEQVFIPLTVGGGVRTVEDVDRLLRAGADKVSVNTAAIARPELLRELSERFGSQCIVLSVDARTVPQGQPDTPSGWEVTTHGGKRGTGIDAVEWAVRGAELGVGEILLNSMDADGTKAGFDLPMIRAVRAAVHVPVIASGGAGAVEHFAPAVGAGADAVLAASVFHFGDMTIGDVKKSMRAEGITVR</sequence>
<feature type="chain" id="PRO_1000148936" description="Imidazole glycerol phosphate synthase subunit HisF">
    <location>
        <begin position="1"/>
        <end position="257"/>
    </location>
</feature>
<feature type="active site" evidence="1">
    <location>
        <position position="12"/>
    </location>
</feature>
<feature type="active site" evidence="1">
    <location>
        <position position="131"/>
    </location>
</feature>
<gene>
    <name evidence="1" type="primary">hisF</name>
    <name type="ordered locus">ROP_07480</name>
</gene>
<keyword id="KW-0028">Amino-acid biosynthesis</keyword>
<keyword id="KW-0963">Cytoplasm</keyword>
<keyword id="KW-0368">Histidine biosynthesis</keyword>
<keyword id="KW-0456">Lyase</keyword>
<evidence type="ECO:0000255" key="1">
    <source>
        <dbReference type="HAMAP-Rule" id="MF_01013"/>
    </source>
</evidence>
<reference key="1">
    <citation type="submission" date="2009-03" db="EMBL/GenBank/DDBJ databases">
        <title>Comparison of the complete genome sequences of Rhodococcus erythropolis PR4 and Rhodococcus opacus B4.</title>
        <authorList>
            <person name="Takarada H."/>
            <person name="Sekine M."/>
            <person name="Hosoyama A."/>
            <person name="Yamada R."/>
            <person name="Fujisawa T."/>
            <person name="Omata S."/>
            <person name="Shimizu A."/>
            <person name="Tsukatani N."/>
            <person name="Tanikawa S."/>
            <person name="Fujita N."/>
            <person name="Harayama S."/>
        </authorList>
    </citation>
    <scope>NUCLEOTIDE SEQUENCE [LARGE SCALE GENOMIC DNA]</scope>
    <source>
        <strain>B4</strain>
    </source>
</reference>
<name>HIS6_RHOOB</name>